<organism>
    <name type="scientific">Sulfurisphaera tokodaii (strain DSM 16993 / JCM 10545 / NBRC 100140 / 7)</name>
    <name type="common">Sulfolobus tokodaii</name>
    <dbReference type="NCBI Taxonomy" id="273063"/>
    <lineage>
        <taxon>Archaea</taxon>
        <taxon>Thermoproteota</taxon>
        <taxon>Thermoprotei</taxon>
        <taxon>Sulfolobales</taxon>
        <taxon>Sulfolobaceae</taxon>
        <taxon>Sulfurisphaera</taxon>
    </lineage>
</organism>
<name>RL15E_SULTO</name>
<keyword id="KW-1185">Reference proteome</keyword>
<keyword id="KW-0687">Ribonucleoprotein</keyword>
<keyword id="KW-0689">Ribosomal protein</keyword>
<feature type="chain" id="PRO_0000127587" description="Large ribosomal subunit protein eL15">
    <location>
        <begin position="1"/>
        <end position="215"/>
    </location>
</feature>
<feature type="region of interest" description="Disordered" evidence="2">
    <location>
        <begin position="179"/>
        <end position="215"/>
    </location>
</feature>
<feature type="compositionally biased region" description="Basic and acidic residues" evidence="2">
    <location>
        <begin position="188"/>
        <end position="202"/>
    </location>
</feature>
<reference key="1">
    <citation type="journal article" date="2001" name="DNA Res.">
        <title>Complete genome sequence of an aerobic thermoacidophilic Crenarchaeon, Sulfolobus tokodaii strain7.</title>
        <authorList>
            <person name="Kawarabayasi Y."/>
            <person name="Hino Y."/>
            <person name="Horikawa H."/>
            <person name="Jin-no K."/>
            <person name="Takahashi M."/>
            <person name="Sekine M."/>
            <person name="Baba S."/>
            <person name="Ankai A."/>
            <person name="Kosugi H."/>
            <person name="Hosoyama A."/>
            <person name="Fukui S."/>
            <person name="Nagai Y."/>
            <person name="Nishijima K."/>
            <person name="Otsuka R."/>
            <person name="Nakazawa H."/>
            <person name="Takamiya M."/>
            <person name="Kato Y."/>
            <person name="Yoshizawa T."/>
            <person name="Tanaka T."/>
            <person name="Kudoh Y."/>
            <person name="Yamazaki J."/>
            <person name="Kushida N."/>
            <person name="Oguchi A."/>
            <person name="Aoki K."/>
            <person name="Masuda S."/>
            <person name="Yanagii M."/>
            <person name="Nishimura M."/>
            <person name="Yamagishi A."/>
            <person name="Oshima T."/>
            <person name="Kikuchi H."/>
        </authorList>
    </citation>
    <scope>NUCLEOTIDE SEQUENCE [LARGE SCALE GENOMIC DNA]</scope>
    <source>
        <strain>DSM 16993 / JCM 10545 / NBRC 100140 / 7</strain>
    </source>
</reference>
<comment type="similarity">
    <text evidence="1">Belongs to the eukaryotic ribosomal protein eL15 family.</text>
</comment>
<protein>
    <recommendedName>
        <fullName evidence="1">Large ribosomal subunit protein eL15</fullName>
    </recommendedName>
    <alternativeName>
        <fullName evidence="3">50S ribosomal protein L15e</fullName>
    </alternativeName>
</protein>
<proteinExistence type="inferred from homology"/>
<accession>Q975G1</accession>
<gene>
    <name evidence="1" type="primary">rpl15e</name>
    <name type="ordered locus">STK_04500</name>
</gene>
<dbReference type="EMBL" id="BA000023">
    <property type="protein sequence ID" value="BAB65440.1"/>
    <property type="molecule type" value="Genomic_DNA"/>
</dbReference>
<dbReference type="RefSeq" id="WP_010978423.1">
    <property type="nucleotide sequence ID" value="NC_003106.2"/>
</dbReference>
<dbReference type="SMR" id="Q975G1"/>
<dbReference type="STRING" id="273063.STK_04500"/>
<dbReference type="GeneID" id="1458387"/>
<dbReference type="KEGG" id="sto:STK_04500"/>
<dbReference type="PATRIC" id="fig|273063.9.peg.522"/>
<dbReference type="eggNOG" id="arCOG04209">
    <property type="taxonomic scope" value="Archaea"/>
</dbReference>
<dbReference type="OrthoDB" id="8183at2157"/>
<dbReference type="Proteomes" id="UP000001015">
    <property type="component" value="Chromosome"/>
</dbReference>
<dbReference type="GO" id="GO:0022625">
    <property type="term" value="C:cytosolic large ribosomal subunit"/>
    <property type="evidence" value="ECO:0007669"/>
    <property type="project" value="TreeGrafter"/>
</dbReference>
<dbReference type="GO" id="GO:0003723">
    <property type="term" value="F:RNA binding"/>
    <property type="evidence" value="ECO:0007669"/>
    <property type="project" value="TreeGrafter"/>
</dbReference>
<dbReference type="GO" id="GO:0003735">
    <property type="term" value="F:structural constituent of ribosome"/>
    <property type="evidence" value="ECO:0007669"/>
    <property type="project" value="InterPro"/>
</dbReference>
<dbReference type="GO" id="GO:0002181">
    <property type="term" value="P:cytoplasmic translation"/>
    <property type="evidence" value="ECO:0007669"/>
    <property type="project" value="TreeGrafter"/>
</dbReference>
<dbReference type="FunFam" id="3.40.1120.10:FF:000002">
    <property type="entry name" value="50S ribosomal protein L15e"/>
    <property type="match status" value="1"/>
</dbReference>
<dbReference type="Gene3D" id="3.40.1120.10">
    <property type="entry name" value="Ribosomal protein l15e"/>
    <property type="match status" value="1"/>
</dbReference>
<dbReference type="HAMAP" id="MF_00256">
    <property type="entry name" value="Ribosomal_eL15"/>
    <property type="match status" value="1"/>
</dbReference>
<dbReference type="InterPro" id="IPR024794">
    <property type="entry name" value="Rbsml_eL15_core_dom_sf"/>
</dbReference>
<dbReference type="InterPro" id="IPR000439">
    <property type="entry name" value="Ribosomal_eL15"/>
</dbReference>
<dbReference type="InterPro" id="IPR020926">
    <property type="entry name" value="Ribosomal_eL15_arc"/>
</dbReference>
<dbReference type="InterPro" id="IPR020925">
    <property type="entry name" value="Ribosomal_eL15_CS"/>
</dbReference>
<dbReference type="InterPro" id="IPR012678">
    <property type="entry name" value="Ribosomal_uL23/eL15/eS24_sf"/>
</dbReference>
<dbReference type="NCBIfam" id="NF003269">
    <property type="entry name" value="PRK04243.1"/>
    <property type="match status" value="1"/>
</dbReference>
<dbReference type="PANTHER" id="PTHR11847:SF4">
    <property type="entry name" value="LARGE RIBOSOMAL SUBUNIT PROTEIN EL15"/>
    <property type="match status" value="1"/>
</dbReference>
<dbReference type="PANTHER" id="PTHR11847">
    <property type="entry name" value="RIBOSOMAL PROTEIN L15"/>
    <property type="match status" value="1"/>
</dbReference>
<dbReference type="Pfam" id="PF00827">
    <property type="entry name" value="Ribosomal_L15e"/>
    <property type="match status" value="1"/>
</dbReference>
<dbReference type="SMART" id="SM01384">
    <property type="entry name" value="Ribosomal_L15e"/>
    <property type="match status" value="1"/>
</dbReference>
<dbReference type="SUPFAM" id="SSF54189">
    <property type="entry name" value="Ribosomal proteins S24e, L23 and L15e"/>
    <property type="match status" value="1"/>
</dbReference>
<dbReference type="PROSITE" id="PS01194">
    <property type="entry name" value="RIBOSOMAL_L15E"/>
    <property type="match status" value="1"/>
</dbReference>
<evidence type="ECO:0000255" key="1">
    <source>
        <dbReference type="HAMAP-Rule" id="MF_00256"/>
    </source>
</evidence>
<evidence type="ECO:0000256" key="2">
    <source>
        <dbReference type="SAM" id="MobiDB-lite"/>
    </source>
</evidence>
<evidence type="ECO:0000305" key="3"/>
<sequence length="215" mass="25430">MTSSMYNYIEQTWQSDEWKKVLRQRLIEWRKSPAVERIDKPTRLNRARAIGYKAKQGFVVVRVRVRRGGLNKPRPNSGRRPKRMGVYGYSPAKGYRWIAEEKAARKFPNLEVLGSYYVGEDGMYKYYEIIMVDPNHPVIKSDPNLKWLQDPANRKRVFRGLTSAGKKARGLLKSRGLKGTVKHKWKKKEKEREQKKRHEATKYYRLQNYDKLPGK</sequence>